<proteinExistence type="inferred from homology"/>
<dbReference type="EC" id="2.7.7.6" evidence="1"/>
<dbReference type="EMBL" id="AE000782">
    <property type="protein sequence ID" value="AAB89370.1"/>
    <property type="molecule type" value="Genomic_DNA"/>
</dbReference>
<dbReference type="PIR" id="D69485">
    <property type="entry name" value="D69485"/>
</dbReference>
<dbReference type="SMR" id="O28394"/>
<dbReference type="STRING" id="224325.AF_1885"/>
<dbReference type="PaxDb" id="224325-AF_1885"/>
<dbReference type="EnsemblBacteria" id="AAB89370">
    <property type="protein sequence ID" value="AAB89370"/>
    <property type="gene ID" value="AF_1885"/>
</dbReference>
<dbReference type="KEGG" id="afu:AF_1885"/>
<dbReference type="eggNOG" id="arCOG04258">
    <property type="taxonomic scope" value="Archaea"/>
</dbReference>
<dbReference type="HOGENOM" id="CLU_058320_4_0_2"/>
<dbReference type="PhylomeDB" id="O28394"/>
<dbReference type="Proteomes" id="UP000002199">
    <property type="component" value="Chromosome"/>
</dbReference>
<dbReference type="GO" id="GO:0005737">
    <property type="term" value="C:cytoplasm"/>
    <property type="evidence" value="ECO:0007669"/>
    <property type="project" value="UniProtKB-SubCell"/>
</dbReference>
<dbReference type="GO" id="GO:0000428">
    <property type="term" value="C:DNA-directed RNA polymerase complex"/>
    <property type="evidence" value="ECO:0007669"/>
    <property type="project" value="UniProtKB-KW"/>
</dbReference>
<dbReference type="GO" id="GO:0003677">
    <property type="term" value="F:DNA binding"/>
    <property type="evidence" value="ECO:0007669"/>
    <property type="project" value="InterPro"/>
</dbReference>
<dbReference type="GO" id="GO:0003899">
    <property type="term" value="F:DNA-directed RNA polymerase activity"/>
    <property type="evidence" value="ECO:0007669"/>
    <property type="project" value="UniProtKB-UniRule"/>
</dbReference>
<dbReference type="GO" id="GO:0006366">
    <property type="term" value="P:transcription by RNA polymerase II"/>
    <property type="evidence" value="ECO:0007669"/>
    <property type="project" value="TreeGrafter"/>
</dbReference>
<dbReference type="GO" id="GO:0006362">
    <property type="term" value="P:transcription elongation by RNA polymerase I"/>
    <property type="evidence" value="ECO:0007669"/>
    <property type="project" value="TreeGrafter"/>
</dbReference>
<dbReference type="GO" id="GO:0042797">
    <property type="term" value="P:tRNA transcription by RNA polymerase III"/>
    <property type="evidence" value="ECO:0007669"/>
    <property type="project" value="TreeGrafter"/>
</dbReference>
<dbReference type="Gene3D" id="3.90.940.20">
    <property type="entry name" value="RPB5-like RNA polymerase subunit"/>
    <property type="match status" value="1"/>
</dbReference>
<dbReference type="HAMAP" id="MF_00025">
    <property type="entry name" value="RNApol_Rpo5_RPB5"/>
    <property type="match status" value="1"/>
</dbReference>
<dbReference type="InterPro" id="IPR014381">
    <property type="entry name" value="Arch_Rpo5/euc_Rpb5"/>
</dbReference>
<dbReference type="InterPro" id="IPR000783">
    <property type="entry name" value="RNA_pol_subH/Rpb5_C"/>
</dbReference>
<dbReference type="InterPro" id="IPR020608">
    <property type="entry name" value="RNA_pol_subH/Rpb5_CS"/>
</dbReference>
<dbReference type="InterPro" id="IPR035913">
    <property type="entry name" value="RPB5-like_sf"/>
</dbReference>
<dbReference type="NCBIfam" id="NF007129">
    <property type="entry name" value="PRK09570.1"/>
    <property type="match status" value="1"/>
</dbReference>
<dbReference type="PANTHER" id="PTHR10535">
    <property type="entry name" value="DNA-DIRECTED RNA POLYMERASES I, II, AND III SUBUNIT RPABC1"/>
    <property type="match status" value="1"/>
</dbReference>
<dbReference type="PANTHER" id="PTHR10535:SF0">
    <property type="entry name" value="DNA-DIRECTED RNA POLYMERASES I, II, AND III SUBUNIT RPABC1"/>
    <property type="match status" value="1"/>
</dbReference>
<dbReference type="Pfam" id="PF01191">
    <property type="entry name" value="RNA_pol_Rpb5_C"/>
    <property type="match status" value="1"/>
</dbReference>
<dbReference type="SUPFAM" id="SSF55287">
    <property type="entry name" value="RPB5-like RNA polymerase subunit"/>
    <property type="match status" value="1"/>
</dbReference>
<dbReference type="PROSITE" id="PS01110">
    <property type="entry name" value="RNA_POL_H_23KD"/>
    <property type="match status" value="1"/>
</dbReference>
<protein>
    <recommendedName>
        <fullName evidence="1">DNA-directed RNA polymerase subunit Rpo5</fullName>
        <ecNumber evidence="1">2.7.7.6</ecNumber>
    </recommendedName>
    <alternativeName>
        <fullName evidence="1">DNA-directed RNA polymerase subunit H</fullName>
    </alternativeName>
</protein>
<sequence>MKFKLQDHMLVPKHEVLSKEEAEELLKILGIGKEQLPKIKADDPIAKEIGAKPGDIVKITRKSLTAGESVFYRLVV</sequence>
<comment type="function">
    <text evidence="1">DNA-dependent RNA polymerase (RNAP) catalyzes the transcription of DNA into RNA using the four ribonucleoside triphosphates as substrates.</text>
</comment>
<comment type="catalytic activity">
    <reaction evidence="1">
        <text>RNA(n) + a ribonucleoside 5'-triphosphate = RNA(n+1) + diphosphate</text>
        <dbReference type="Rhea" id="RHEA:21248"/>
        <dbReference type="Rhea" id="RHEA-COMP:14527"/>
        <dbReference type="Rhea" id="RHEA-COMP:17342"/>
        <dbReference type="ChEBI" id="CHEBI:33019"/>
        <dbReference type="ChEBI" id="CHEBI:61557"/>
        <dbReference type="ChEBI" id="CHEBI:140395"/>
        <dbReference type="EC" id="2.7.7.6"/>
    </reaction>
</comment>
<comment type="subunit">
    <text evidence="1">Part of the RNA polymerase complex.</text>
</comment>
<comment type="subcellular location">
    <subcellularLocation>
        <location evidence="1">Cytoplasm</location>
    </subcellularLocation>
</comment>
<comment type="similarity">
    <text evidence="1">Belongs to the archaeal Rpo5/eukaryotic RPB5 RNA polymerase subunit family.</text>
</comment>
<accession>O28394</accession>
<name>RPO5_ARCFU</name>
<evidence type="ECO:0000255" key="1">
    <source>
        <dbReference type="HAMAP-Rule" id="MF_00025"/>
    </source>
</evidence>
<feature type="chain" id="PRO_0000146089" description="DNA-directed RNA polymerase subunit Rpo5">
    <location>
        <begin position="1"/>
        <end position="76"/>
    </location>
</feature>
<keyword id="KW-0963">Cytoplasm</keyword>
<keyword id="KW-0240">DNA-directed RNA polymerase</keyword>
<keyword id="KW-0548">Nucleotidyltransferase</keyword>
<keyword id="KW-1185">Reference proteome</keyword>
<keyword id="KW-0804">Transcription</keyword>
<keyword id="KW-0808">Transferase</keyword>
<gene>
    <name evidence="1" type="primary">rpo5</name>
    <name evidence="1" type="synonym">rpoH</name>
    <name type="ordered locus">AF_1885</name>
</gene>
<reference key="1">
    <citation type="journal article" date="1997" name="Nature">
        <title>The complete genome sequence of the hyperthermophilic, sulphate-reducing archaeon Archaeoglobus fulgidus.</title>
        <authorList>
            <person name="Klenk H.-P."/>
            <person name="Clayton R.A."/>
            <person name="Tomb J.-F."/>
            <person name="White O."/>
            <person name="Nelson K.E."/>
            <person name="Ketchum K.A."/>
            <person name="Dodson R.J."/>
            <person name="Gwinn M.L."/>
            <person name="Hickey E.K."/>
            <person name="Peterson J.D."/>
            <person name="Richardson D.L."/>
            <person name="Kerlavage A.R."/>
            <person name="Graham D.E."/>
            <person name="Kyrpides N.C."/>
            <person name="Fleischmann R.D."/>
            <person name="Quackenbush J."/>
            <person name="Lee N.H."/>
            <person name="Sutton G.G."/>
            <person name="Gill S.R."/>
            <person name="Kirkness E.F."/>
            <person name="Dougherty B.A."/>
            <person name="McKenney K."/>
            <person name="Adams M.D."/>
            <person name="Loftus B.J."/>
            <person name="Peterson S.N."/>
            <person name="Reich C.I."/>
            <person name="McNeil L.K."/>
            <person name="Badger J.H."/>
            <person name="Glodek A."/>
            <person name="Zhou L."/>
            <person name="Overbeek R."/>
            <person name="Gocayne J.D."/>
            <person name="Weidman J.F."/>
            <person name="McDonald L.A."/>
            <person name="Utterback T.R."/>
            <person name="Cotton M.D."/>
            <person name="Spriggs T."/>
            <person name="Artiach P."/>
            <person name="Kaine B.P."/>
            <person name="Sykes S.M."/>
            <person name="Sadow P.W."/>
            <person name="D'Andrea K.P."/>
            <person name="Bowman C."/>
            <person name="Fujii C."/>
            <person name="Garland S.A."/>
            <person name="Mason T.M."/>
            <person name="Olsen G.J."/>
            <person name="Fraser C.M."/>
            <person name="Smith H.O."/>
            <person name="Woese C.R."/>
            <person name="Venter J.C."/>
        </authorList>
    </citation>
    <scope>NUCLEOTIDE SEQUENCE [LARGE SCALE GENOMIC DNA]</scope>
    <source>
        <strain>ATCC 49558 / DSM 4304 / JCM 9628 / NBRC 100126 / VC-16</strain>
    </source>
</reference>
<organism>
    <name type="scientific">Archaeoglobus fulgidus (strain ATCC 49558 / DSM 4304 / JCM 9628 / NBRC 100126 / VC-16)</name>
    <dbReference type="NCBI Taxonomy" id="224325"/>
    <lineage>
        <taxon>Archaea</taxon>
        <taxon>Methanobacteriati</taxon>
        <taxon>Methanobacteriota</taxon>
        <taxon>Archaeoglobi</taxon>
        <taxon>Archaeoglobales</taxon>
        <taxon>Archaeoglobaceae</taxon>
        <taxon>Archaeoglobus</taxon>
    </lineage>
</organism>